<name>METK_HALSA</name>
<keyword id="KW-0067">ATP-binding</keyword>
<keyword id="KW-0460">Magnesium</keyword>
<keyword id="KW-0547">Nucleotide-binding</keyword>
<keyword id="KW-0554">One-carbon metabolism</keyword>
<keyword id="KW-1185">Reference proteome</keyword>
<keyword id="KW-0808">Transferase</keyword>
<organism>
    <name type="scientific">Halobacterium salinarum (strain ATCC 700922 / JCM 11081 / NRC-1)</name>
    <name type="common">Halobacterium halobium</name>
    <dbReference type="NCBI Taxonomy" id="64091"/>
    <lineage>
        <taxon>Archaea</taxon>
        <taxon>Methanobacteriati</taxon>
        <taxon>Methanobacteriota</taxon>
        <taxon>Stenosarchaea group</taxon>
        <taxon>Halobacteria</taxon>
        <taxon>Halobacteriales</taxon>
        <taxon>Halobacteriaceae</taxon>
        <taxon>Halobacterium</taxon>
        <taxon>Halobacterium salinarum NRC-34001</taxon>
    </lineage>
</organism>
<sequence>MTDRNIQVQSLDRSAVEDDAVEIVERKGLGHPDSICDGIAEHVCETLAREYRDRVGHVLHFNTDETQLVAGDAAPAFGGGNVIDPIYILVVGRATSHYVEADGTEHHIPVESIALEAAREYLRETLPHLDLETDVIVDVKLGEGSGDLQDVFTDDDDGPAVPMANDTSFGVGHAPLTETERIVLEAERSLNGPYAEHTPAVGEDVKVMGKREDDHIDLTIAAALVDAHVPDMDAYIAQVEAIREHVFDLATEHTDREVTVHVNTADDYESGSIYLTTTGTSAEQGDDGSVGRGNRANGLITPNRAMSMEATSGKNPVNHIGKIYNLLSTQIAEAVVAEVDGIRDLRVRLLSQIGRPIDEPHVADVEVVTEDGTAVADVDAEIERIVDAQLASVTDLTRRVIDGERTTF</sequence>
<protein>
    <recommendedName>
        <fullName evidence="1">S-adenosylmethionine synthase</fullName>
        <shortName evidence="1">AdoMet synthase</shortName>
        <ecNumber evidence="1">2.5.1.6</ecNumber>
    </recommendedName>
    <alternativeName>
        <fullName evidence="1">Methionine adenosyltransferase</fullName>
    </alternativeName>
</protein>
<dbReference type="EC" id="2.5.1.6" evidence="1"/>
<dbReference type="EMBL" id="AE004437">
    <property type="protein sequence ID" value="AAG19644.1"/>
    <property type="molecule type" value="Genomic_DNA"/>
</dbReference>
<dbReference type="PIR" id="H84284">
    <property type="entry name" value="H84284"/>
</dbReference>
<dbReference type="RefSeq" id="WP_010902940.1">
    <property type="nucleotide sequence ID" value="NC_002607.1"/>
</dbReference>
<dbReference type="SMR" id="Q9HQ73"/>
<dbReference type="FunCoup" id="Q9HQ73">
    <property type="interactions" value="117"/>
</dbReference>
<dbReference type="STRING" id="64091.VNG_1297C"/>
<dbReference type="PaxDb" id="64091-VNG_1297C"/>
<dbReference type="KEGG" id="hal:VNG_1297C"/>
<dbReference type="PATRIC" id="fig|64091.14.peg.992"/>
<dbReference type="HOGENOM" id="CLU_057642_0_0_2"/>
<dbReference type="InParanoid" id="Q9HQ73"/>
<dbReference type="OrthoDB" id="204488at2157"/>
<dbReference type="PhylomeDB" id="Q9HQ73"/>
<dbReference type="UniPathway" id="UPA00315">
    <property type="reaction ID" value="UER00080"/>
</dbReference>
<dbReference type="Proteomes" id="UP000000554">
    <property type="component" value="Chromosome"/>
</dbReference>
<dbReference type="GO" id="GO:0005524">
    <property type="term" value="F:ATP binding"/>
    <property type="evidence" value="ECO:0007669"/>
    <property type="project" value="UniProtKB-UniRule"/>
</dbReference>
<dbReference type="GO" id="GO:0000287">
    <property type="term" value="F:magnesium ion binding"/>
    <property type="evidence" value="ECO:0007669"/>
    <property type="project" value="UniProtKB-UniRule"/>
</dbReference>
<dbReference type="GO" id="GO:0004478">
    <property type="term" value="F:methionine adenosyltransferase activity"/>
    <property type="evidence" value="ECO:0007669"/>
    <property type="project" value="UniProtKB-UniRule"/>
</dbReference>
<dbReference type="GO" id="GO:0006730">
    <property type="term" value="P:one-carbon metabolic process"/>
    <property type="evidence" value="ECO:0007669"/>
    <property type="project" value="UniProtKB-KW"/>
</dbReference>
<dbReference type="GO" id="GO:0006556">
    <property type="term" value="P:S-adenosylmethionine biosynthetic process"/>
    <property type="evidence" value="ECO:0007669"/>
    <property type="project" value="UniProtKB-UniRule"/>
</dbReference>
<dbReference type="Gene3D" id="3.30.300.10">
    <property type="match status" value="1"/>
</dbReference>
<dbReference type="Gene3D" id="3.30.300.280">
    <property type="entry name" value="S-adenosylmethionine synthetase, C-terminal domain"/>
    <property type="match status" value="1"/>
</dbReference>
<dbReference type="HAMAP" id="MF_00136">
    <property type="entry name" value="S_AdoMet_synth2"/>
    <property type="match status" value="1"/>
</dbReference>
<dbReference type="InterPro" id="IPR027790">
    <property type="entry name" value="AdoMet_synthase_2_family"/>
</dbReference>
<dbReference type="InterPro" id="IPR042544">
    <property type="entry name" value="AdoMet_synthase_3"/>
</dbReference>
<dbReference type="InterPro" id="IPR002795">
    <property type="entry name" value="S-AdoMet_synthetase_arc"/>
</dbReference>
<dbReference type="NCBIfam" id="NF003364">
    <property type="entry name" value="PRK04439.1-3"/>
    <property type="match status" value="1"/>
</dbReference>
<dbReference type="NCBIfam" id="NF003366">
    <property type="entry name" value="PRK04439.1-5"/>
    <property type="match status" value="1"/>
</dbReference>
<dbReference type="PANTHER" id="PTHR36697">
    <property type="entry name" value="S-ADENOSYLMETHIONINE SYNTHASE"/>
    <property type="match status" value="1"/>
</dbReference>
<dbReference type="PANTHER" id="PTHR36697:SF1">
    <property type="entry name" value="S-ADENOSYLMETHIONINE SYNTHASE"/>
    <property type="match status" value="1"/>
</dbReference>
<dbReference type="Pfam" id="PF01941">
    <property type="entry name" value="AdoMet_Synthase"/>
    <property type="match status" value="1"/>
</dbReference>
<proteinExistence type="inferred from homology"/>
<gene>
    <name evidence="1" type="primary">mat</name>
    <name type="ordered locus">VNG_1297C</name>
</gene>
<reference key="1">
    <citation type="journal article" date="2000" name="Proc. Natl. Acad. Sci. U.S.A.">
        <title>Genome sequence of Halobacterium species NRC-1.</title>
        <authorList>
            <person name="Ng W.V."/>
            <person name="Kennedy S.P."/>
            <person name="Mahairas G.G."/>
            <person name="Berquist B."/>
            <person name="Pan M."/>
            <person name="Shukla H.D."/>
            <person name="Lasky S.R."/>
            <person name="Baliga N.S."/>
            <person name="Thorsson V."/>
            <person name="Sbrogna J."/>
            <person name="Swartzell S."/>
            <person name="Weir D."/>
            <person name="Hall J."/>
            <person name="Dahl T.A."/>
            <person name="Welti R."/>
            <person name="Goo Y.A."/>
            <person name="Leithauser B."/>
            <person name="Keller K."/>
            <person name="Cruz R."/>
            <person name="Danson M.J."/>
            <person name="Hough D.W."/>
            <person name="Maddocks D.G."/>
            <person name="Jablonski P.E."/>
            <person name="Krebs M.P."/>
            <person name="Angevine C.M."/>
            <person name="Dale H."/>
            <person name="Isenbarger T.A."/>
            <person name="Peck R.F."/>
            <person name="Pohlschroder M."/>
            <person name="Spudich J.L."/>
            <person name="Jung K.-H."/>
            <person name="Alam M."/>
            <person name="Freitas T."/>
            <person name="Hou S."/>
            <person name="Daniels C.J."/>
            <person name="Dennis P.P."/>
            <person name="Omer A.D."/>
            <person name="Ebhardt H."/>
            <person name="Lowe T.M."/>
            <person name="Liang P."/>
            <person name="Riley M."/>
            <person name="Hood L."/>
            <person name="DasSarma S."/>
        </authorList>
    </citation>
    <scope>NUCLEOTIDE SEQUENCE [LARGE SCALE GENOMIC DNA]</scope>
    <source>
        <strain>ATCC 700922 / JCM 11081 / NRC-1</strain>
    </source>
</reference>
<accession>Q9HQ73</accession>
<evidence type="ECO:0000255" key="1">
    <source>
        <dbReference type="HAMAP-Rule" id="MF_00136"/>
    </source>
</evidence>
<comment type="function">
    <text evidence="1">Catalyzes the formation of S-adenosylmethionine from methionine and ATP.</text>
</comment>
<comment type="catalytic activity">
    <reaction evidence="1">
        <text>L-methionine + ATP + H2O = S-adenosyl-L-methionine + phosphate + diphosphate</text>
        <dbReference type="Rhea" id="RHEA:21080"/>
        <dbReference type="ChEBI" id="CHEBI:15377"/>
        <dbReference type="ChEBI" id="CHEBI:30616"/>
        <dbReference type="ChEBI" id="CHEBI:33019"/>
        <dbReference type="ChEBI" id="CHEBI:43474"/>
        <dbReference type="ChEBI" id="CHEBI:57844"/>
        <dbReference type="ChEBI" id="CHEBI:59789"/>
        <dbReference type="EC" id="2.5.1.6"/>
    </reaction>
</comment>
<comment type="cofactor">
    <cofactor evidence="1">
        <name>Mg(2+)</name>
        <dbReference type="ChEBI" id="CHEBI:18420"/>
    </cofactor>
</comment>
<comment type="pathway">
    <text evidence="1">Amino-acid biosynthesis; S-adenosyl-L-methionine biosynthesis; S-adenosyl-L-methionine from L-methionine: step 1/1.</text>
</comment>
<comment type="similarity">
    <text evidence="1">Belongs to the AdoMet synthase 2 family.</text>
</comment>
<feature type="chain" id="PRO_0000150026" description="S-adenosylmethionine synthase">
    <location>
        <begin position="1"/>
        <end position="408"/>
    </location>
</feature>
<feature type="binding site" evidence="1">
    <location>
        <begin position="142"/>
        <end position="147"/>
    </location>
    <ligand>
        <name>ATP</name>
        <dbReference type="ChEBI" id="CHEBI:30616"/>
    </ligand>
</feature>